<comment type="function">
    <text>Antibacterial activity against representative Gram-negative and Gram-positive bacteria.</text>
</comment>
<comment type="subcellular location">
    <subcellularLocation>
        <location>Secreted</location>
    </subcellularLocation>
</comment>
<comment type="tissue specificity">
    <text>Expressed by the skin glands.</text>
</comment>
<comment type="similarity">
    <text evidence="2">Belongs to the frog skin active peptide (FSAP) family. Brevinin subfamily.</text>
</comment>
<dbReference type="SMR" id="P82234"/>
<dbReference type="GO" id="GO:0005576">
    <property type="term" value="C:extracellular region"/>
    <property type="evidence" value="ECO:0007669"/>
    <property type="project" value="UniProtKB-SubCell"/>
</dbReference>
<dbReference type="GO" id="GO:0042742">
    <property type="term" value="P:defense response to bacterium"/>
    <property type="evidence" value="ECO:0007669"/>
    <property type="project" value="UniProtKB-KW"/>
</dbReference>
<accession>P82234</accession>
<feature type="peptide" id="PRO_0000043552" description="Brevinin-2Tc">
    <location>
        <begin position="1"/>
        <end position="29"/>
    </location>
</feature>
<feature type="disulfide bond" evidence="1">
    <location>
        <begin position="23"/>
        <end position="29"/>
    </location>
</feature>
<sequence>GLWETIKNFGKKFTLNILHKLKCKIGGGC</sequence>
<evidence type="ECO:0000250" key="1"/>
<evidence type="ECO:0000305" key="2"/>
<protein>
    <recommendedName>
        <fullName>Brevinin-2Tc</fullName>
    </recommendedName>
</protein>
<keyword id="KW-0878">Amphibian defense peptide</keyword>
<keyword id="KW-0044">Antibiotic</keyword>
<keyword id="KW-0929">Antimicrobial</keyword>
<keyword id="KW-0903">Direct protein sequencing</keyword>
<keyword id="KW-1015">Disulfide bond</keyword>
<keyword id="KW-0964">Secreted</keyword>
<name>BR2C_RANTE</name>
<proteinExistence type="evidence at protein level"/>
<reference key="1">
    <citation type="journal article" date="1998" name="Biopolymers">
        <title>Antimicrobial peptides from amphibian skin: what do they tell us?</title>
        <authorList>
            <person name="Simmaco M."/>
            <person name="Mignogna G."/>
            <person name="Barra D."/>
        </authorList>
    </citation>
    <scope>PROTEIN SEQUENCE</scope>
    <source>
        <tissue>Skin secretion</tissue>
    </source>
</reference>
<organism>
    <name type="scientific">Rana temporaria</name>
    <name type="common">European common frog</name>
    <dbReference type="NCBI Taxonomy" id="8407"/>
    <lineage>
        <taxon>Eukaryota</taxon>
        <taxon>Metazoa</taxon>
        <taxon>Chordata</taxon>
        <taxon>Craniata</taxon>
        <taxon>Vertebrata</taxon>
        <taxon>Euteleostomi</taxon>
        <taxon>Amphibia</taxon>
        <taxon>Batrachia</taxon>
        <taxon>Anura</taxon>
        <taxon>Neobatrachia</taxon>
        <taxon>Ranoidea</taxon>
        <taxon>Ranidae</taxon>
        <taxon>Rana</taxon>
        <taxon>Rana</taxon>
    </lineage>
</organism>